<feature type="chain" id="PRO_0000338645" description="Phytanoyl-CoA hydroxylase-interacting protein-like">
    <location>
        <begin position="1"/>
        <end position="375"/>
    </location>
</feature>
<feature type="domain" description="Fibronectin type-III" evidence="4">
    <location>
        <begin position="51"/>
        <end position="160"/>
    </location>
</feature>
<feature type="modified residue" description="Phosphoserine" evidence="2">
    <location>
        <position position="11"/>
    </location>
</feature>
<feature type="modified residue" description="Phosphoserine" evidence="2">
    <location>
        <position position="12"/>
    </location>
</feature>
<feature type="modified residue" description="Phosphoserine" evidence="7">
    <location>
        <position position="15"/>
    </location>
</feature>
<feature type="modified residue" description="Phosphoserine" evidence="7">
    <location>
        <position position="24"/>
    </location>
</feature>
<feature type="glycosylation site" description="N-linked (GlcNAc...) asparagine" evidence="3">
    <location>
        <position position="22"/>
    </location>
</feature>
<feature type="glycosylation site" description="N-linked (GlcNAc...) asparagine" evidence="3">
    <location>
        <position position="36"/>
    </location>
</feature>
<feature type="splice variant" id="VSP_034074" description="In isoform 2." evidence="5">
    <location>
        <begin position="1"/>
        <end position="45"/>
    </location>
</feature>
<sequence>MEVPRLDHALSSPSSPCEEIKNLSLEAIQLCDRDGNKSQDSGIAEMEELPVPHNIKINNITCDSFKISWDMDSKSKDRITHYFIDLNKKENKNSNKFKHKDVPTKLVAKAVPLPMTVRGHWFLSPRTEYTVAVQTASKQVDGDYVVSEWSEIIEFCTADYSKVHLTQLLEKADVIAGRMLKFSVFYRNQHKEYFDYVRDHYGNAMQPSIKDNSGSHGSPISGKLEGIFFSCSTEFNTGKPPQDSPYGRYRFEIAAEKLFNPNTNLYFGDFYCMYTAYHYVILVIAPVGSPGDEFCKQRLPQLNSKDNKFLTCTEEDGRLLYHHAQDVILEVIYTDPVALSLGTVAEITGHQLMSLSTANAKKDPSCKTCNISVGR</sequence>
<protein>
    <recommendedName>
        <fullName>Phytanoyl-CoA hydroxylase-interacting protein-like</fullName>
    </recommendedName>
</protein>
<name>PHIPL_RAT</name>
<gene>
    <name type="primary">Phyhipl</name>
</gene>
<keyword id="KW-0025">Alternative splicing</keyword>
<keyword id="KW-0325">Glycoprotein</keyword>
<keyword id="KW-0597">Phosphoprotein</keyword>
<keyword id="KW-1185">Reference proteome</keyword>
<reference key="1">
    <citation type="journal article" date="2004" name="Nature">
        <title>Genome sequence of the Brown Norway rat yields insights into mammalian evolution.</title>
        <authorList>
            <person name="Gibbs R.A."/>
            <person name="Weinstock G.M."/>
            <person name="Metzker M.L."/>
            <person name="Muzny D.M."/>
            <person name="Sodergren E.J."/>
            <person name="Scherer S."/>
            <person name="Scott G."/>
            <person name="Steffen D."/>
            <person name="Worley K.C."/>
            <person name="Burch P.E."/>
            <person name="Okwuonu G."/>
            <person name="Hines S."/>
            <person name="Lewis L."/>
            <person name="Deramo C."/>
            <person name="Delgado O."/>
            <person name="Dugan-Rocha S."/>
            <person name="Miner G."/>
            <person name="Morgan M."/>
            <person name="Hawes A."/>
            <person name="Gill R."/>
            <person name="Holt R.A."/>
            <person name="Adams M.D."/>
            <person name="Amanatides P.G."/>
            <person name="Baden-Tillson H."/>
            <person name="Barnstead M."/>
            <person name="Chin S."/>
            <person name="Evans C.A."/>
            <person name="Ferriera S."/>
            <person name="Fosler C."/>
            <person name="Glodek A."/>
            <person name="Gu Z."/>
            <person name="Jennings D."/>
            <person name="Kraft C.L."/>
            <person name="Nguyen T."/>
            <person name="Pfannkoch C.M."/>
            <person name="Sitter C."/>
            <person name="Sutton G.G."/>
            <person name="Venter J.C."/>
            <person name="Woodage T."/>
            <person name="Smith D."/>
            <person name="Lee H.-M."/>
            <person name="Gustafson E."/>
            <person name="Cahill P."/>
            <person name="Kana A."/>
            <person name="Doucette-Stamm L."/>
            <person name="Weinstock K."/>
            <person name="Fechtel K."/>
            <person name="Weiss R.B."/>
            <person name="Dunn D.M."/>
            <person name="Green E.D."/>
            <person name="Blakesley R.W."/>
            <person name="Bouffard G.G."/>
            <person name="De Jong P.J."/>
            <person name="Osoegawa K."/>
            <person name="Zhu B."/>
            <person name="Marra M."/>
            <person name="Schein J."/>
            <person name="Bosdet I."/>
            <person name="Fjell C."/>
            <person name="Jones S."/>
            <person name="Krzywinski M."/>
            <person name="Mathewson C."/>
            <person name="Siddiqui A."/>
            <person name="Wye N."/>
            <person name="McPherson J."/>
            <person name="Zhao S."/>
            <person name="Fraser C.M."/>
            <person name="Shetty J."/>
            <person name="Shatsman S."/>
            <person name="Geer K."/>
            <person name="Chen Y."/>
            <person name="Abramzon S."/>
            <person name="Nierman W.C."/>
            <person name="Havlak P.H."/>
            <person name="Chen R."/>
            <person name="Durbin K.J."/>
            <person name="Egan A."/>
            <person name="Ren Y."/>
            <person name="Song X.-Z."/>
            <person name="Li B."/>
            <person name="Liu Y."/>
            <person name="Qin X."/>
            <person name="Cawley S."/>
            <person name="Cooney A.J."/>
            <person name="D'Souza L.M."/>
            <person name="Martin K."/>
            <person name="Wu J.Q."/>
            <person name="Gonzalez-Garay M.L."/>
            <person name="Jackson A.R."/>
            <person name="Kalafus K.J."/>
            <person name="McLeod M.P."/>
            <person name="Milosavljevic A."/>
            <person name="Virk D."/>
            <person name="Volkov A."/>
            <person name="Wheeler D.A."/>
            <person name="Zhang Z."/>
            <person name="Bailey J.A."/>
            <person name="Eichler E.E."/>
            <person name="Tuzun E."/>
            <person name="Birney E."/>
            <person name="Mongin E."/>
            <person name="Ureta-Vidal A."/>
            <person name="Woodwark C."/>
            <person name="Zdobnov E."/>
            <person name="Bork P."/>
            <person name="Suyama M."/>
            <person name="Torrents D."/>
            <person name="Alexandersson M."/>
            <person name="Trask B.J."/>
            <person name="Young J.M."/>
            <person name="Huang H."/>
            <person name="Wang H."/>
            <person name="Xing H."/>
            <person name="Daniels S."/>
            <person name="Gietzen D."/>
            <person name="Schmidt J."/>
            <person name="Stevens K."/>
            <person name="Vitt U."/>
            <person name="Wingrove J."/>
            <person name="Camara F."/>
            <person name="Mar Alba M."/>
            <person name="Abril J.F."/>
            <person name="Guigo R."/>
            <person name="Smit A."/>
            <person name="Dubchak I."/>
            <person name="Rubin E.M."/>
            <person name="Couronne O."/>
            <person name="Poliakov A."/>
            <person name="Huebner N."/>
            <person name="Ganten D."/>
            <person name="Goesele C."/>
            <person name="Hummel O."/>
            <person name="Kreitler T."/>
            <person name="Lee Y.-A."/>
            <person name="Monti J."/>
            <person name="Schulz H."/>
            <person name="Zimdahl H."/>
            <person name="Himmelbauer H."/>
            <person name="Lehrach H."/>
            <person name="Jacob H.J."/>
            <person name="Bromberg S."/>
            <person name="Gullings-Handley J."/>
            <person name="Jensen-Seaman M.I."/>
            <person name="Kwitek A.E."/>
            <person name="Lazar J."/>
            <person name="Pasko D."/>
            <person name="Tonellato P.J."/>
            <person name="Twigger S."/>
            <person name="Ponting C.P."/>
            <person name="Duarte J.M."/>
            <person name="Rice S."/>
            <person name="Goodstadt L."/>
            <person name="Beatson S.A."/>
            <person name="Emes R.D."/>
            <person name="Winter E.E."/>
            <person name="Webber C."/>
            <person name="Brandt P."/>
            <person name="Nyakatura G."/>
            <person name="Adetobi M."/>
            <person name="Chiaromonte F."/>
            <person name="Elnitski L."/>
            <person name="Eswara P."/>
            <person name="Hardison R.C."/>
            <person name="Hou M."/>
            <person name="Kolbe D."/>
            <person name="Makova K."/>
            <person name="Miller W."/>
            <person name="Nekrutenko A."/>
            <person name="Riemer C."/>
            <person name="Schwartz S."/>
            <person name="Taylor J."/>
            <person name="Yang S."/>
            <person name="Zhang Y."/>
            <person name="Lindpaintner K."/>
            <person name="Andrews T.D."/>
            <person name="Caccamo M."/>
            <person name="Clamp M."/>
            <person name="Clarke L."/>
            <person name="Curwen V."/>
            <person name="Durbin R.M."/>
            <person name="Eyras E."/>
            <person name="Searle S.M."/>
            <person name="Cooper G.M."/>
            <person name="Batzoglou S."/>
            <person name="Brudno M."/>
            <person name="Sidow A."/>
            <person name="Stone E.A."/>
            <person name="Payseur B.A."/>
            <person name="Bourque G."/>
            <person name="Lopez-Otin C."/>
            <person name="Puente X.S."/>
            <person name="Chakrabarti K."/>
            <person name="Chatterji S."/>
            <person name="Dewey C."/>
            <person name="Pachter L."/>
            <person name="Bray N."/>
            <person name="Yap V.B."/>
            <person name="Caspi A."/>
            <person name="Tesler G."/>
            <person name="Pevzner P.A."/>
            <person name="Haussler D."/>
            <person name="Roskin K.M."/>
            <person name="Baertsch R."/>
            <person name="Clawson H."/>
            <person name="Furey T.S."/>
            <person name="Hinrichs A.S."/>
            <person name="Karolchik D."/>
            <person name="Kent W.J."/>
            <person name="Rosenbloom K.R."/>
            <person name="Trumbower H."/>
            <person name="Weirauch M."/>
            <person name="Cooper D.N."/>
            <person name="Stenson P.D."/>
            <person name="Ma B."/>
            <person name="Brent M."/>
            <person name="Arumugam M."/>
            <person name="Shteynberg D."/>
            <person name="Copley R.R."/>
            <person name="Taylor M.S."/>
            <person name="Riethman H."/>
            <person name="Mudunuri U."/>
            <person name="Peterson J."/>
            <person name="Guyer M."/>
            <person name="Felsenfeld A."/>
            <person name="Old S."/>
            <person name="Mockrin S."/>
            <person name="Collins F.S."/>
        </authorList>
    </citation>
    <scope>NUCLEOTIDE SEQUENCE [LARGE SCALE GENOMIC DNA]</scope>
    <source>
        <strain>Brown Norway</strain>
    </source>
</reference>
<reference key="2">
    <citation type="journal article" date="2004" name="Genome Res.">
        <title>The status, quality, and expansion of the NIH full-length cDNA project: the Mammalian Gene Collection (MGC).</title>
        <authorList>
            <consortium name="The MGC Project Team"/>
        </authorList>
    </citation>
    <scope>NUCLEOTIDE SEQUENCE [LARGE SCALE MRNA] (ISOFORM 2)</scope>
    <source>
        <tissue>Testis</tissue>
    </source>
</reference>
<reference key="3">
    <citation type="journal article" date="2012" name="Nat. Commun.">
        <title>Quantitative maps of protein phosphorylation sites across 14 different rat organs and tissues.</title>
        <authorList>
            <person name="Lundby A."/>
            <person name="Secher A."/>
            <person name="Lage K."/>
            <person name="Nordsborg N.B."/>
            <person name="Dmytriyev A."/>
            <person name="Lundby C."/>
            <person name="Olsen J.V."/>
        </authorList>
    </citation>
    <scope>PHOSPHORYLATION [LARGE SCALE ANALYSIS] AT SER-15 AND SER-24</scope>
    <scope>IDENTIFICATION BY MASS SPECTROMETRY [LARGE SCALE ANALYSIS]</scope>
</reference>
<dbReference type="EMBL" id="AABR03116205">
    <property type="status" value="NOT_ANNOTATED_CDS"/>
    <property type="molecule type" value="Genomic_DNA"/>
</dbReference>
<dbReference type="EMBL" id="BC078977">
    <property type="protein sequence ID" value="AAH78977.1"/>
    <property type="molecule type" value="mRNA"/>
</dbReference>
<dbReference type="RefSeq" id="NP_001012076.1">
    <molecule id="Q6AYN4-2"/>
    <property type="nucleotide sequence ID" value="NM_001012076.2"/>
</dbReference>
<dbReference type="RefSeq" id="NP_001385913.1">
    <molecule id="Q6AYN4-1"/>
    <property type="nucleotide sequence ID" value="NM_001398984.1"/>
</dbReference>
<dbReference type="RefSeq" id="XP_006256409.1">
    <property type="nucleotide sequence ID" value="XM_006256347.2"/>
</dbReference>
<dbReference type="RefSeq" id="XP_063135256.1">
    <molecule id="Q6AYN4-2"/>
    <property type="nucleotide sequence ID" value="XM_063279186.1"/>
</dbReference>
<dbReference type="SMR" id="Q6AYN4"/>
<dbReference type="BioGRID" id="259518">
    <property type="interactions" value="2"/>
</dbReference>
<dbReference type="FunCoup" id="Q6AYN4">
    <property type="interactions" value="1541"/>
</dbReference>
<dbReference type="STRING" id="10116.ENSRNOP00000000299"/>
<dbReference type="GlyCosmos" id="Q6AYN4">
    <property type="glycosylation" value="2 sites, No reported glycans"/>
</dbReference>
<dbReference type="GlyGen" id="Q6AYN4">
    <property type="glycosylation" value="2 sites"/>
</dbReference>
<dbReference type="iPTMnet" id="Q6AYN4"/>
<dbReference type="PhosphoSitePlus" id="Q6AYN4"/>
<dbReference type="jPOST" id="Q6AYN4"/>
<dbReference type="PaxDb" id="10116-ENSRNOP00000000299"/>
<dbReference type="Ensembl" id="ENSRNOT00000058151.3">
    <molecule id="Q6AYN4-2"/>
    <property type="protein sequence ID" value="ENSRNOP00000054955.2"/>
    <property type="gene ID" value="ENSRNOG00000000274.8"/>
</dbReference>
<dbReference type="Ensembl" id="ENSRNOT00000105062.1">
    <molecule id="Q6AYN4-1"/>
    <property type="protein sequence ID" value="ENSRNOP00000089889.1"/>
    <property type="gene ID" value="ENSRNOG00000000274.8"/>
</dbReference>
<dbReference type="GeneID" id="309901"/>
<dbReference type="KEGG" id="rno:309901"/>
<dbReference type="AGR" id="RGD:1307967"/>
<dbReference type="CTD" id="84457"/>
<dbReference type="RGD" id="1307967">
    <property type="gene designation" value="Phyhipl"/>
</dbReference>
<dbReference type="eggNOG" id="ENOG502QQIT">
    <property type="taxonomic scope" value="Eukaryota"/>
</dbReference>
<dbReference type="GeneTree" id="ENSGT00390000014563"/>
<dbReference type="HOGENOM" id="CLU_054218_1_0_1"/>
<dbReference type="InParanoid" id="Q6AYN4"/>
<dbReference type="PhylomeDB" id="Q6AYN4"/>
<dbReference type="TreeFam" id="TF314485"/>
<dbReference type="PRO" id="PR:Q6AYN4"/>
<dbReference type="Proteomes" id="UP000002494">
    <property type="component" value="Chromosome 20"/>
</dbReference>
<dbReference type="Bgee" id="ENSRNOG00000000274">
    <property type="expression patterns" value="Expressed in testis and 15 other cell types or tissues"/>
</dbReference>
<dbReference type="GO" id="GO:0005737">
    <property type="term" value="C:cytoplasm"/>
    <property type="evidence" value="ECO:0000318"/>
    <property type="project" value="GO_Central"/>
</dbReference>
<dbReference type="CDD" id="cd00063">
    <property type="entry name" value="FN3"/>
    <property type="match status" value="1"/>
</dbReference>
<dbReference type="FunFam" id="2.60.40.10:FF:000277">
    <property type="entry name" value="Phytanoyl-CoA hydroxylase-interacting protein-like protein"/>
    <property type="match status" value="1"/>
</dbReference>
<dbReference type="Gene3D" id="2.60.40.10">
    <property type="entry name" value="Immunoglobulins"/>
    <property type="match status" value="1"/>
</dbReference>
<dbReference type="InterPro" id="IPR003961">
    <property type="entry name" value="FN3_dom"/>
</dbReference>
<dbReference type="InterPro" id="IPR036116">
    <property type="entry name" value="FN3_sf"/>
</dbReference>
<dbReference type="InterPro" id="IPR013783">
    <property type="entry name" value="Ig-like_fold"/>
</dbReference>
<dbReference type="InterPro" id="IPR042868">
    <property type="entry name" value="PHYHIP/PHYHIPL"/>
</dbReference>
<dbReference type="InterPro" id="IPR045545">
    <property type="entry name" value="PHYIP/PHIPL_C"/>
</dbReference>
<dbReference type="PANTHER" id="PTHR15698:SF8">
    <property type="entry name" value="PHYTANOYL-COA HYDROXYLASE-INTERACTING PROTEIN-LIKE"/>
    <property type="match status" value="1"/>
</dbReference>
<dbReference type="PANTHER" id="PTHR15698">
    <property type="entry name" value="PROTEIN CBG15099"/>
    <property type="match status" value="1"/>
</dbReference>
<dbReference type="Pfam" id="PF00041">
    <property type="entry name" value="fn3"/>
    <property type="match status" value="1"/>
</dbReference>
<dbReference type="Pfam" id="PF19281">
    <property type="entry name" value="PHYHIP_C"/>
    <property type="match status" value="1"/>
</dbReference>
<dbReference type="SUPFAM" id="SSF49265">
    <property type="entry name" value="Fibronectin type III"/>
    <property type="match status" value="1"/>
</dbReference>
<dbReference type="PROSITE" id="PS50853">
    <property type="entry name" value="FN3"/>
    <property type="match status" value="1"/>
</dbReference>
<accession>Q6AYN4</accession>
<proteinExistence type="evidence at protein level"/>
<evidence type="ECO:0000250" key="1"/>
<evidence type="ECO:0000250" key="2">
    <source>
        <dbReference type="UniProtKB" id="Q8BGT8"/>
    </source>
</evidence>
<evidence type="ECO:0000255" key="3"/>
<evidence type="ECO:0000255" key="4">
    <source>
        <dbReference type="PROSITE-ProRule" id="PRU00316"/>
    </source>
</evidence>
<evidence type="ECO:0000303" key="5">
    <source>
    </source>
</evidence>
<evidence type="ECO:0000305" key="6"/>
<evidence type="ECO:0007744" key="7">
    <source>
    </source>
</evidence>
<organism>
    <name type="scientific">Rattus norvegicus</name>
    <name type="common">Rat</name>
    <dbReference type="NCBI Taxonomy" id="10116"/>
    <lineage>
        <taxon>Eukaryota</taxon>
        <taxon>Metazoa</taxon>
        <taxon>Chordata</taxon>
        <taxon>Craniata</taxon>
        <taxon>Vertebrata</taxon>
        <taxon>Euteleostomi</taxon>
        <taxon>Mammalia</taxon>
        <taxon>Eutheria</taxon>
        <taxon>Euarchontoglires</taxon>
        <taxon>Glires</taxon>
        <taxon>Rodentia</taxon>
        <taxon>Myomorpha</taxon>
        <taxon>Muroidea</taxon>
        <taxon>Muridae</taxon>
        <taxon>Murinae</taxon>
        <taxon>Rattus</taxon>
    </lineage>
</organism>
<comment type="function">
    <text evidence="1">May play a role in the development of the central system.</text>
</comment>
<comment type="alternative products">
    <event type="alternative splicing"/>
    <isoform>
        <id>Q6AYN4-1</id>
        <name>1</name>
        <sequence type="displayed"/>
    </isoform>
    <isoform>
        <id>Q6AYN4-2</id>
        <name>2</name>
        <sequence type="described" ref="VSP_034074"/>
    </isoform>
</comment>
<comment type="similarity">
    <text evidence="6">Belongs to the PHYHIP family.</text>
</comment>